<protein>
    <recommendedName>
        <fullName>Guanine nucleotide-binding protein G(o) subunit alpha</fullName>
        <ecNumber evidence="2">3.6.5.-</ecNumber>
    </recommendedName>
</protein>
<reference key="1">
    <citation type="journal article" date="1987" name="J. Biol. Chem.">
        <title>Molecular cloning of five GTP-binding protein cDNA species from rat olfactory neuroepithelium.</title>
        <authorList>
            <person name="Jones D.T."/>
            <person name="Reed R.R."/>
        </authorList>
    </citation>
    <scope>NUCLEOTIDE SEQUENCE [MRNA] (ISOFORM ALPHA-1)</scope>
</reference>
<reference key="2">
    <citation type="journal article" date="1991" name="Proc. Natl. Acad. Sci. U.S.A.">
        <title>Structure of the human gene and two rat cDNAs encoding the alpha chain of GTP-binding regulatory protein Go: two different mRNAs are generated by alternative splicing.</title>
        <authorList>
            <person name="Tsukamoto T."/>
            <person name="Toyama R."/>
            <person name="Itoh H."/>
            <person name="Kozasa T."/>
            <person name="Matsuoka M."/>
            <person name="Kaziro Y."/>
        </authorList>
    </citation>
    <scope>NUCLEOTIDE SEQUENCE [MRNA] (ISOFORM ALPHA-2)</scope>
</reference>
<reference key="3">
    <citation type="submission" date="2007-04" db="UniProtKB">
        <authorList>
            <person name="Lubec G."/>
            <person name="Chen W.-Q."/>
        </authorList>
    </citation>
    <scope>PROTEIN SEQUENCE OF 22-32; 36-46; 68-86; 87-100; 114-130; 163-177; 182-193; 199-206 AND 244-272</scope>
    <scope>IDENTIFICATION BY MASS SPECTROMETRY</scope>
    <source>
        <strain>Sprague-Dawley</strain>
        <tissue>Hippocampus</tissue>
    </source>
</reference>
<reference key="4">
    <citation type="journal article" date="1986" name="Proc. Natl. Acad. Sci. U.S.A.">
        <title>Molecular cloning and sequence determination of cDNAs for alpha subunits of the guanine nucleotide-binding proteins Gs, Gi, and Go from rat brain.</title>
        <authorList>
            <person name="Itoh H."/>
            <person name="Kozasa T."/>
            <person name="Nagata S."/>
            <person name="Nakamura S."/>
            <person name="Katada T."/>
            <person name="Ui M."/>
            <person name="Iwai S."/>
            <person name="Ohtsuka E."/>
            <person name="Kawasaki H."/>
            <person name="Suzuki K."/>
            <person name="Kaziro Y."/>
        </authorList>
    </citation>
    <scope>NUCLEOTIDE SEQUENCE [MRNA] OF 45-354 (ISOFORM ALPHA-1)</scope>
</reference>
<reference key="5">
    <citation type="journal article" date="1990" name="Nature">
        <title>G0 is a major growth cone protein subject to regulation by GAP-43.</title>
        <authorList>
            <person name="Strittmatter S.M."/>
            <person name="Valenzuela D."/>
            <person name="Kennedy T.E."/>
            <person name="Neer E.J."/>
            <person name="Fishman M.C."/>
        </authorList>
    </citation>
    <scope>PROTEIN SEQUENCE OF 55-67; 114-129 AND 163-176</scope>
</reference>
<reference key="6">
    <citation type="journal article" date="1993" name="Biochem. J.">
        <title>A novel N-terminal motif for palmitoylation of G-protein alpha subunits.</title>
        <authorList>
            <person name="Parenti M."/>
            <person name="Vigano M.A."/>
            <person name="Newman C.M.H."/>
            <person name="Milligan G."/>
            <person name="Magee A.I."/>
        </authorList>
    </citation>
    <scope>MYRISTOYLATION AT GLY-2</scope>
    <scope>PALMITOYLATION AT CYS-3</scope>
    <scope>LACK OF PALMITOYLATION AT CYS-351</scope>
</reference>
<reference key="7">
    <citation type="journal article" date="1999" name="Proc. Natl. Acad. Sci. U.S.A.">
        <title>Posttranslational modification of Galphao1 generates Galphao3, an abundant G protein in brain.</title>
        <authorList>
            <person name="Exner T."/>
            <person name="Jensen O.N."/>
            <person name="Mann M."/>
            <person name="Kleuss C."/>
            <person name="Nurnberg B."/>
        </authorList>
    </citation>
    <scope>DEAMIDATION AT ASN-346</scope>
</reference>
<comment type="function">
    <text evidence="2">Guanine nucleotide-binding proteins (G proteins) function as transducers downstream of G protein-coupled receptors (GPCRs) in numerous signaling cascades. The alpha chain contains the guanine nucleotide binding site and alternates between an active, GTP-bound state and an inactive, GDP-bound state. Signaling by an activated GPCR promotes GDP release and GTP binding. The alpha subunit has a low GTPase activity that converts bound GTP to GDP, thereby terminating the signal. Both GDP release and GTP hydrolysis are modulated by numerous regulatory proteins. Signaling is mediated via effector proteins, such as adenylate cyclase. Inhibits adenylate cyclase activity, leading to decreased intracellular cAMP levels.</text>
</comment>
<comment type="catalytic activity">
    <reaction evidence="2">
        <text>GTP + H2O = GDP + phosphate + H(+)</text>
        <dbReference type="Rhea" id="RHEA:19669"/>
        <dbReference type="ChEBI" id="CHEBI:15377"/>
        <dbReference type="ChEBI" id="CHEBI:15378"/>
        <dbReference type="ChEBI" id="CHEBI:37565"/>
        <dbReference type="ChEBI" id="CHEBI:43474"/>
        <dbReference type="ChEBI" id="CHEBI:58189"/>
    </reaction>
    <physiologicalReaction direction="left-to-right" evidence="2">
        <dbReference type="Rhea" id="RHEA:19670"/>
    </physiologicalReaction>
</comment>
<comment type="activity regulation">
    <text evidence="2">The GTPase activity is promoted by GTPAse activators, such as RGS14, RGS16 and RGS19.</text>
</comment>
<comment type="subunit">
    <text evidence="1 2">G proteins are composed of 3 units; alpha, beta and gamma. The alpha chain contains the guanine nucleotide binding site. Forms a complex with GNB1 and GNG3 (By similarity). Interacts with RGS14. Interacts with RGS16 (By similarity). Interacts with RGS19 (By similarity). Interacts (when palmitoylated) with ADGRG3 (By similarity).</text>
</comment>
<comment type="interaction">
    <interactant intactId="EBI-8071125">
        <id>P59215</id>
    </interactant>
    <interactant intactId="EBI-476586">
        <id>P17612</id>
        <label>PRKACA</label>
    </interactant>
    <organismsDiffer>true</organismsDiffer>
    <experiments>4</experiments>
</comment>
<comment type="interaction">
    <interactant intactId="EBI-8071125">
        <id>P59215</id>
    </interactant>
    <interactant intactId="EBI-15933052">
        <id>Q9NS28</id>
        <label>RGS18</label>
    </interactant>
    <organismsDiffer>true</organismsDiffer>
    <experiments>2</experiments>
</comment>
<comment type="subcellular location">
    <subcellularLocation>
        <location evidence="2">Cell membrane</location>
    </subcellularLocation>
    <subcellularLocation>
        <location evidence="1">Membrane</location>
        <topology evidence="1">Lipid-anchor</topology>
    </subcellularLocation>
</comment>
<comment type="alternative products">
    <event type="alternative splicing"/>
    <isoform>
        <id>P59215-1</id>
        <name>Alpha-1</name>
        <sequence type="displayed"/>
    </isoform>
    <isoform>
        <id>P59215-2</id>
        <id>P30033-1</id>
        <name>Alpha-2</name>
        <sequence type="described" ref="VSP_031252"/>
    </isoform>
</comment>
<comment type="PTM">
    <text evidence="5">Deamidation of Asn-346 converts alpha-1 to alpha-3.</text>
</comment>
<comment type="PTM">
    <text evidence="2">Histaminylated at Gln-205 residues by TGM2.</text>
</comment>
<comment type="similarity">
    <text evidence="7">Belongs to the G-alpha family. G(i/o/t/z) subfamily.</text>
</comment>
<keyword id="KW-0025">Alternative splicing</keyword>
<keyword id="KW-1003">Cell membrane</keyword>
<keyword id="KW-0903">Direct protein sequencing</keyword>
<keyword id="KW-0342">GTP-binding</keyword>
<keyword id="KW-0378">Hydrolase</keyword>
<keyword id="KW-0449">Lipoprotein</keyword>
<keyword id="KW-0460">Magnesium</keyword>
<keyword id="KW-0472">Membrane</keyword>
<keyword id="KW-0479">Metal-binding</keyword>
<keyword id="KW-0519">Myristate</keyword>
<keyword id="KW-0547">Nucleotide-binding</keyword>
<keyword id="KW-0564">Palmitate</keyword>
<keyword id="KW-1185">Reference proteome</keyword>
<keyword id="KW-0807">Transducer</keyword>
<name>GNAO_RAT</name>
<accession>P59215</accession>
<accession>P04900</accession>
<accession>P30033</accession>
<feature type="initiator methionine" description="Removed" evidence="4">
    <location>
        <position position="1"/>
    </location>
</feature>
<feature type="chain" id="PRO_0000203706" description="Guanine nucleotide-binding protein G(o) subunit alpha">
    <location>
        <begin position="2"/>
        <end position="354"/>
    </location>
</feature>
<feature type="domain" description="G-alpha" evidence="3">
    <location>
        <begin position="32"/>
        <end position="354"/>
    </location>
</feature>
<feature type="region of interest" description="G1 motif" evidence="3">
    <location>
        <begin position="35"/>
        <end position="48"/>
    </location>
</feature>
<feature type="region of interest" description="G2 motif" evidence="3">
    <location>
        <begin position="174"/>
        <end position="182"/>
    </location>
</feature>
<feature type="region of interest" description="G3 motif" evidence="3">
    <location>
        <begin position="197"/>
        <end position="206"/>
    </location>
</feature>
<feature type="region of interest" description="G4 motif" evidence="3">
    <location>
        <begin position="266"/>
        <end position="273"/>
    </location>
</feature>
<feature type="region of interest" description="G5 motif" evidence="3">
    <location>
        <begin position="324"/>
        <end position="329"/>
    </location>
</feature>
<feature type="binding site" evidence="2">
    <location>
        <position position="43"/>
    </location>
    <ligand>
        <name>GTP</name>
        <dbReference type="ChEBI" id="CHEBI:37565"/>
    </ligand>
</feature>
<feature type="binding site" evidence="2">
    <location>
        <position position="46"/>
    </location>
    <ligand>
        <name>GTP</name>
        <dbReference type="ChEBI" id="CHEBI:37565"/>
    </ligand>
</feature>
<feature type="binding site" evidence="2">
    <location>
        <position position="47"/>
    </location>
    <ligand>
        <name>GTP</name>
        <dbReference type="ChEBI" id="CHEBI:37565"/>
    </ligand>
</feature>
<feature type="binding site" evidence="2">
    <location>
        <position position="47"/>
    </location>
    <ligand>
        <name>Mg(2+)</name>
        <dbReference type="ChEBI" id="CHEBI:18420"/>
    </ligand>
</feature>
<feature type="binding site" evidence="2">
    <location>
        <position position="48"/>
    </location>
    <ligand>
        <name>GTP</name>
        <dbReference type="ChEBI" id="CHEBI:37565"/>
    </ligand>
</feature>
<feature type="binding site" evidence="2">
    <location>
        <position position="152"/>
    </location>
    <ligand>
        <name>GTP</name>
        <dbReference type="ChEBI" id="CHEBI:37565"/>
    </ligand>
</feature>
<feature type="binding site" evidence="2">
    <location>
        <position position="176"/>
    </location>
    <ligand>
        <name>GTP</name>
        <dbReference type="ChEBI" id="CHEBI:37565"/>
    </ligand>
</feature>
<feature type="binding site" evidence="2">
    <location>
        <position position="177"/>
    </location>
    <ligand>
        <name>GTP</name>
        <dbReference type="ChEBI" id="CHEBI:37565"/>
    </ligand>
</feature>
<feature type="binding site" evidence="2">
    <location>
        <position position="178"/>
    </location>
    <ligand>
        <name>GTP</name>
        <dbReference type="ChEBI" id="CHEBI:37565"/>
    </ligand>
</feature>
<feature type="binding site" evidence="2">
    <location>
        <position position="179"/>
    </location>
    <ligand>
        <name>GTP</name>
        <dbReference type="ChEBI" id="CHEBI:37565"/>
    </ligand>
</feature>
<feature type="binding site" evidence="2">
    <location>
        <position position="182"/>
    </location>
    <ligand>
        <name>Mg(2+)</name>
        <dbReference type="ChEBI" id="CHEBI:18420"/>
    </ligand>
</feature>
<feature type="binding site" evidence="2">
    <location>
        <position position="270"/>
    </location>
    <ligand>
        <name>GTP</name>
        <dbReference type="ChEBI" id="CHEBI:37565"/>
    </ligand>
</feature>
<feature type="binding site" evidence="2">
    <location>
        <position position="273"/>
    </location>
    <ligand>
        <name>GTP</name>
        <dbReference type="ChEBI" id="CHEBI:37565"/>
    </ligand>
</feature>
<feature type="binding site" evidence="2">
    <location>
        <position position="325"/>
    </location>
    <ligand>
        <name>GTP</name>
        <dbReference type="ChEBI" id="CHEBI:37565"/>
    </ligand>
</feature>
<feature type="site" description="Not S-palmitoylated" evidence="4">
    <location>
        <position position="351"/>
    </location>
</feature>
<feature type="modified residue" description="5-glutamyl histamine" evidence="2">
    <location>
        <position position="205"/>
    </location>
</feature>
<feature type="modified residue" description="Deamidated asparagine; in form Alpha-3" evidence="5">
    <location>
        <position position="346"/>
    </location>
</feature>
<feature type="lipid moiety-binding region" description="N-myristoyl glycine" evidence="4">
    <location>
        <position position="2"/>
    </location>
</feature>
<feature type="lipid moiety-binding region" description="S-palmitoyl cysteine" evidence="4">
    <location>
        <position position="3"/>
    </location>
</feature>
<feature type="lipid moiety-binding region" description="S-palmitoyl cysteine" evidence="2">
    <location>
        <position position="351"/>
    </location>
</feature>
<feature type="splice variant" id="VSP_031252" description="In isoform Alpha-2." evidence="6">
    <original>SLMLFDSICNNKFFIDTSIILFLNKKDLFGEKIKKSPLTICFPEYPGSNTYEDAAAYIQTQFESKNRSPNKEIYCHMTCATDTNNIQVVFDAVTDIIIANNLRGCGLY</original>
    <variation>FLKLFDSICNNKWFTDTSIILFLNKKDIFEEKIKKSPLTICFPEYTGPSAFTEAVAHIQGQYESKNKSAHKEVYSHVTCATDTNNIQFVFDAVTDVIIAKNLRGCGLY</variation>
    <location>
        <begin position="247"/>
        <end position="354"/>
    </location>
</feature>
<dbReference type="EC" id="3.6.5.-" evidence="2"/>
<dbReference type="EMBL" id="M17526">
    <property type="protein sequence ID" value="AAA40826.1"/>
    <property type="molecule type" value="mRNA"/>
</dbReference>
<dbReference type="EMBL" id="M12671">
    <property type="protein sequence ID" value="AAA41262.1"/>
    <property type="molecule type" value="mRNA"/>
</dbReference>
<dbReference type="PIR" id="C40436">
    <property type="entry name" value="RGRTO1"/>
</dbReference>
<dbReference type="PIR" id="D40436">
    <property type="entry name" value="RGRTO2"/>
</dbReference>
<dbReference type="RefSeq" id="NP_001401839.1">
    <molecule id="P59215-1"/>
    <property type="nucleotide sequence ID" value="NM_001414910.1"/>
</dbReference>
<dbReference type="RefSeq" id="NP_059023.1">
    <molecule id="P59215-1"/>
    <property type="nucleotide sequence ID" value="NM_017327.3"/>
</dbReference>
<dbReference type="SMR" id="P59215"/>
<dbReference type="BioGRID" id="248412">
    <property type="interactions" value="8"/>
</dbReference>
<dbReference type="CORUM" id="P59215"/>
<dbReference type="DIP" id="DIP-59090N"/>
<dbReference type="FunCoup" id="P59215">
    <property type="interactions" value="2091"/>
</dbReference>
<dbReference type="IntAct" id="P59215">
    <property type="interactions" value="22"/>
</dbReference>
<dbReference type="MINT" id="P59215"/>
<dbReference type="STRING" id="10116.ENSRNOP00000026373"/>
<dbReference type="BindingDB" id="P59215"/>
<dbReference type="ChEMBL" id="CHEMBL4295785"/>
<dbReference type="iPTMnet" id="P59215"/>
<dbReference type="PhosphoSitePlus" id="P59215"/>
<dbReference type="SwissPalm" id="P59215"/>
<dbReference type="jPOST" id="P59215"/>
<dbReference type="PaxDb" id="10116-ENSRNOP00000026373"/>
<dbReference type="Ensembl" id="ENSRNOT00000026373.6">
    <molecule id="P59215-1"/>
    <property type="protein sequence ID" value="ENSRNOP00000026373.3"/>
    <property type="gene ID" value="ENSRNOG00000019482.8"/>
</dbReference>
<dbReference type="GeneID" id="50664"/>
<dbReference type="KEGG" id="rno:50664"/>
<dbReference type="UCSC" id="RGD:628732">
    <molecule id="P59215-1"/>
    <property type="organism name" value="rat"/>
</dbReference>
<dbReference type="AGR" id="RGD:628732"/>
<dbReference type="CTD" id="2775"/>
<dbReference type="RGD" id="628732">
    <property type="gene designation" value="Gnao1"/>
</dbReference>
<dbReference type="eggNOG" id="KOG0082">
    <property type="taxonomic scope" value="Eukaryota"/>
</dbReference>
<dbReference type="GeneTree" id="ENSGT00940000155883"/>
<dbReference type="HOGENOM" id="CLU_014184_6_0_1"/>
<dbReference type="InParanoid" id="P59215"/>
<dbReference type="PhylomeDB" id="P59215"/>
<dbReference type="TreeFam" id="TF300673"/>
<dbReference type="Reactome" id="R-RNO-4086398">
    <property type="pathway name" value="Ca2+ pathway"/>
</dbReference>
<dbReference type="SABIO-RK" id="P59215"/>
<dbReference type="PRO" id="PR:P59215"/>
<dbReference type="Proteomes" id="UP000002494">
    <property type="component" value="Chromosome 19"/>
</dbReference>
<dbReference type="Bgee" id="ENSRNOG00000019482">
    <property type="expression patterns" value="Expressed in frontal cortex and 17 other cell types or tissues"/>
</dbReference>
<dbReference type="GO" id="GO:0044297">
    <property type="term" value="C:cell body"/>
    <property type="evidence" value="ECO:0000266"/>
    <property type="project" value="RGD"/>
</dbReference>
<dbReference type="GO" id="GO:0005737">
    <property type="term" value="C:cytoplasm"/>
    <property type="evidence" value="ECO:0000318"/>
    <property type="project" value="GO_Central"/>
</dbReference>
<dbReference type="GO" id="GO:0030425">
    <property type="term" value="C:dendrite"/>
    <property type="evidence" value="ECO:0000266"/>
    <property type="project" value="RGD"/>
</dbReference>
<dbReference type="GO" id="GO:0098982">
    <property type="term" value="C:GABA-ergic synapse"/>
    <property type="evidence" value="ECO:0000266"/>
    <property type="project" value="RGD"/>
</dbReference>
<dbReference type="GO" id="GO:0098978">
    <property type="term" value="C:glutamatergic synapse"/>
    <property type="evidence" value="ECO:0000266"/>
    <property type="project" value="RGD"/>
</dbReference>
<dbReference type="GO" id="GO:0005834">
    <property type="term" value="C:heterotrimeric G-protein complex"/>
    <property type="evidence" value="ECO:0000266"/>
    <property type="project" value="RGD"/>
</dbReference>
<dbReference type="GO" id="GO:0043209">
    <property type="term" value="C:myelin sheath"/>
    <property type="evidence" value="ECO:0000314"/>
    <property type="project" value="UniProtKB"/>
</dbReference>
<dbReference type="GO" id="GO:0098688">
    <property type="term" value="C:parallel fiber to Purkinje cell synapse"/>
    <property type="evidence" value="ECO:0000314"/>
    <property type="project" value="SynGO"/>
</dbReference>
<dbReference type="GO" id="GO:0005886">
    <property type="term" value="C:plasma membrane"/>
    <property type="evidence" value="ECO:0000266"/>
    <property type="project" value="RGD"/>
</dbReference>
<dbReference type="GO" id="GO:0045211">
    <property type="term" value="C:postsynaptic membrane"/>
    <property type="evidence" value="ECO:0000266"/>
    <property type="project" value="RGD"/>
</dbReference>
<dbReference type="GO" id="GO:0042734">
    <property type="term" value="C:presynaptic membrane"/>
    <property type="evidence" value="ECO:0000266"/>
    <property type="project" value="RGD"/>
</dbReference>
<dbReference type="GO" id="GO:0030672">
    <property type="term" value="C:synaptic vesicle membrane"/>
    <property type="evidence" value="ECO:0000314"/>
    <property type="project" value="SynGO"/>
</dbReference>
<dbReference type="GO" id="GO:0051430">
    <property type="term" value="F:corticotropin-releasing hormone receptor 1 binding"/>
    <property type="evidence" value="ECO:0000353"/>
    <property type="project" value="RGD"/>
</dbReference>
<dbReference type="GO" id="GO:0003925">
    <property type="term" value="F:G protein activity"/>
    <property type="evidence" value="ECO:0000266"/>
    <property type="project" value="RGD"/>
</dbReference>
<dbReference type="GO" id="GO:0031821">
    <property type="term" value="F:G protein-coupled serotonin receptor binding"/>
    <property type="evidence" value="ECO:0000353"/>
    <property type="project" value="RGD"/>
</dbReference>
<dbReference type="GO" id="GO:0031683">
    <property type="term" value="F:G-protein beta/gamma-subunit complex binding"/>
    <property type="evidence" value="ECO:0000318"/>
    <property type="project" value="GO_Central"/>
</dbReference>
<dbReference type="GO" id="GO:0019003">
    <property type="term" value="F:GDP binding"/>
    <property type="evidence" value="ECO:0000304"/>
    <property type="project" value="RGD"/>
</dbReference>
<dbReference type="GO" id="GO:0005525">
    <property type="term" value="F:GTP binding"/>
    <property type="evidence" value="ECO:0000314"/>
    <property type="project" value="RGD"/>
</dbReference>
<dbReference type="GO" id="GO:0032794">
    <property type="term" value="F:GTPase activating protein binding"/>
    <property type="evidence" value="ECO:0000353"/>
    <property type="project" value="RGD"/>
</dbReference>
<dbReference type="GO" id="GO:0003924">
    <property type="term" value="F:GTPase activity"/>
    <property type="evidence" value="ECO:0000314"/>
    <property type="project" value="RGD"/>
</dbReference>
<dbReference type="GO" id="GO:0046872">
    <property type="term" value="F:metal ion binding"/>
    <property type="evidence" value="ECO:0007669"/>
    <property type="project" value="UniProtKB-KW"/>
</dbReference>
<dbReference type="GO" id="GO:0031852">
    <property type="term" value="F:mu-type opioid receptor binding"/>
    <property type="evidence" value="ECO:0000353"/>
    <property type="project" value="RGD"/>
</dbReference>
<dbReference type="GO" id="GO:0005102">
    <property type="term" value="F:signaling receptor binding"/>
    <property type="evidence" value="ECO:0000353"/>
    <property type="project" value="RGD"/>
</dbReference>
<dbReference type="GO" id="GO:0007198">
    <property type="term" value="P:adenylate cyclase-inhibiting serotonin receptor signaling pathway"/>
    <property type="evidence" value="ECO:0000266"/>
    <property type="project" value="RGD"/>
</dbReference>
<dbReference type="GO" id="GO:0007188">
    <property type="term" value="P:adenylate cyclase-modulating G protein-coupled receptor signaling pathway"/>
    <property type="evidence" value="ECO:0000318"/>
    <property type="project" value="GO_Central"/>
</dbReference>
<dbReference type="GO" id="GO:0030900">
    <property type="term" value="P:forebrain development"/>
    <property type="evidence" value="ECO:0000270"/>
    <property type="project" value="RGD"/>
</dbReference>
<dbReference type="GO" id="GO:0007212">
    <property type="term" value="P:G protein-coupled dopamine receptor signaling pathway"/>
    <property type="evidence" value="ECO:0000266"/>
    <property type="project" value="RGD"/>
</dbReference>
<dbReference type="GO" id="GO:0007186">
    <property type="term" value="P:G protein-coupled receptor signaling pathway"/>
    <property type="evidence" value="ECO:0000315"/>
    <property type="project" value="RGD"/>
</dbReference>
<dbReference type="GO" id="GO:0007626">
    <property type="term" value="P:locomotory behavior"/>
    <property type="evidence" value="ECO:0000266"/>
    <property type="project" value="RGD"/>
</dbReference>
<dbReference type="GO" id="GO:0051926">
    <property type="term" value="P:negative regulation of calcium ion transport"/>
    <property type="evidence" value="ECO:0000315"/>
    <property type="project" value="RGD"/>
</dbReference>
<dbReference type="GO" id="GO:0046676">
    <property type="term" value="P:negative regulation of insulin secretion"/>
    <property type="evidence" value="ECO:0000266"/>
    <property type="project" value="RGD"/>
</dbReference>
<dbReference type="GO" id="GO:0031175">
    <property type="term" value="P:neuron projection development"/>
    <property type="evidence" value="ECO:0000270"/>
    <property type="project" value="RGD"/>
</dbReference>
<dbReference type="GO" id="GO:0042475">
    <property type="term" value="P:odontogenesis of dentin-containing tooth"/>
    <property type="evidence" value="ECO:0000270"/>
    <property type="project" value="RGD"/>
</dbReference>
<dbReference type="GO" id="GO:0099170">
    <property type="term" value="P:postsynaptic modulation of chemical synaptic transmission"/>
    <property type="evidence" value="ECO:0000266"/>
    <property type="project" value="RGD"/>
</dbReference>
<dbReference type="GO" id="GO:0008016">
    <property type="term" value="P:regulation of heart contraction"/>
    <property type="evidence" value="ECO:0000266"/>
    <property type="project" value="RGD"/>
</dbReference>
<dbReference type="GO" id="GO:0034097">
    <property type="term" value="P:response to cytokine"/>
    <property type="evidence" value="ECO:0000270"/>
    <property type="project" value="RGD"/>
</dbReference>
<dbReference type="GO" id="GO:0042542">
    <property type="term" value="P:response to hydrogen peroxide"/>
    <property type="evidence" value="ECO:0000270"/>
    <property type="project" value="RGD"/>
</dbReference>
<dbReference type="GO" id="GO:1904014">
    <property type="term" value="P:response to serotonin"/>
    <property type="evidence" value="ECO:0000314"/>
    <property type="project" value="RGD"/>
</dbReference>
<dbReference type="GO" id="GO:0009410">
    <property type="term" value="P:response to xenobiotic stimulus"/>
    <property type="evidence" value="ECO:0000270"/>
    <property type="project" value="RGD"/>
</dbReference>
<dbReference type="GO" id="GO:0006904">
    <property type="term" value="P:vesicle docking involved in exocytosis"/>
    <property type="evidence" value="ECO:0000266"/>
    <property type="project" value="RGD"/>
</dbReference>
<dbReference type="CDD" id="cd00066">
    <property type="entry name" value="G-alpha"/>
    <property type="match status" value="1"/>
</dbReference>
<dbReference type="FunFam" id="3.40.50.300:FF:003559">
    <property type="entry name" value="Guanine nucleotide-binding protein G(i) subunit alpha-1"/>
    <property type="match status" value="1"/>
</dbReference>
<dbReference type="FunFam" id="3.40.50.300:FF:002307">
    <property type="entry name" value="Guanine nucleotide-binding protein G(k) subunit alpha"/>
    <property type="match status" value="1"/>
</dbReference>
<dbReference type="FunFam" id="1.10.400.10:FF:000020">
    <property type="entry name" value="Guanine nucleotide-binding protein G(o) subunit alpha"/>
    <property type="match status" value="1"/>
</dbReference>
<dbReference type="Gene3D" id="1.10.400.10">
    <property type="entry name" value="GI Alpha 1, domain 2-like"/>
    <property type="match status" value="1"/>
</dbReference>
<dbReference type="Gene3D" id="3.40.50.300">
    <property type="entry name" value="P-loop containing nucleotide triphosphate hydrolases"/>
    <property type="match status" value="1"/>
</dbReference>
<dbReference type="InterPro" id="IPR001408">
    <property type="entry name" value="Gprotein_alpha_I"/>
</dbReference>
<dbReference type="InterPro" id="IPR001019">
    <property type="entry name" value="Gprotein_alpha_su"/>
</dbReference>
<dbReference type="InterPro" id="IPR011025">
    <property type="entry name" value="GproteinA_insert"/>
</dbReference>
<dbReference type="InterPro" id="IPR027417">
    <property type="entry name" value="P-loop_NTPase"/>
</dbReference>
<dbReference type="PANTHER" id="PTHR10218">
    <property type="entry name" value="GTP-BINDING PROTEIN ALPHA SUBUNIT"/>
    <property type="match status" value="1"/>
</dbReference>
<dbReference type="PANTHER" id="PTHR10218:SF361">
    <property type="entry name" value="GUANINE NUCLEOTIDE-BINDING PROTEIN G(O) SUBUNIT ALPHA"/>
    <property type="match status" value="1"/>
</dbReference>
<dbReference type="Pfam" id="PF00503">
    <property type="entry name" value="G-alpha"/>
    <property type="match status" value="1"/>
</dbReference>
<dbReference type="PRINTS" id="PR00318">
    <property type="entry name" value="GPROTEINA"/>
</dbReference>
<dbReference type="PRINTS" id="PR00441">
    <property type="entry name" value="GPROTEINAI"/>
</dbReference>
<dbReference type="SMART" id="SM00275">
    <property type="entry name" value="G_alpha"/>
    <property type="match status" value="1"/>
</dbReference>
<dbReference type="SUPFAM" id="SSF52540">
    <property type="entry name" value="P-loop containing nucleoside triphosphate hydrolases"/>
    <property type="match status" value="1"/>
</dbReference>
<dbReference type="SUPFAM" id="SSF47895">
    <property type="entry name" value="Transducin (alpha subunit), insertion domain"/>
    <property type="match status" value="1"/>
</dbReference>
<dbReference type="PROSITE" id="PS51882">
    <property type="entry name" value="G_ALPHA"/>
    <property type="match status" value="1"/>
</dbReference>
<evidence type="ECO:0000250" key="1">
    <source>
        <dbReference type="UniProtKB" id="P09471"/>
    </source>
</evidence>
<evidence type="ECO:0000250" key="2">
    <source>
        <dbReference type="UniProtKB" id="P18872"/>
    </source>
</evidence>
<evidence type="ECO:0000255" key="3">
    <source>
        <dbReference type="PROSITE-ProRule" id="PRU01230"/>
    </source>
</evidence>
<evidence type="ECO:0000269" key="4">
    <source>
    </source>
</evidence>
<evidence type="ECO:0000269" key="5">
    <source>
    </source>
</evidence>
<evidence type="ECO:0000303" key="6">
    <source>
    </source>
</evidence>
<evidence type="ECO:0000305" key="7"/>
<gene>
    <name type="primary">Gnao1</name>
    <name type="synonym">Gna0</name>
    <name type="synonym">Gnao</name>
</gene>
<proteinExistence type="evidence at protein level"/>
<organism>
    <name type="scientific">Rattus norvegicus</name>
    <name type="common">Rat</name>
    <dbReference type="NCBI Taxonomy" id="10116"/>
    <lineage>
        <taxon>Eukaryota</taxon>
        <taxon>Metazoa</taxon>
        <taxon>Chordata</taxon>
        <taxon>Craniata</taxon>
        <taxon>Vertebrata</taxon>
        <taxon>Euteleostomi</taxon>
        <taxon>Mammalia</taxon>
        <taxon>Eutheria</taxon>
        <taxon>Euarchontoglires</taxon>
        <taxon>Glires</taxon>
        <taxon>Rodentia</taxon>
        <taxon>Myomorpha</taxon>
        <taxon>Muroidea</taxon>
        <taxon>Muridae</taxon>
        <taxon>Murinae</taxon>
        <taxon>Rattus</taxon>
    </lineage>
</organism>
<sequence>MGCTLSAEERAALERSKAIEKNLKEDGISAAKDVKLLLLGAGESGKSTIVKQMKIIHEDGFSGEDVKQYKPVVYSNTIQSLAAIVRAMDTLGVEYGDKERKADSKMVCDVVSRMEDTEPFSAELLSAMMRLWGDSGIQECFNRSREYQLNDSAKYYLDSLDRIGAADYQPTEQDILRTRVKTTGIVETHFTFKNLHFRLFDVGGQRSERKKWIHCFEDVTAIIFCVALSGYDQVLHEDETTNRMHESLMLFDSICNNKFFIDTSIILFLNKKDLFGEKIKKSPLTICFPEYPGSNTYEDAAAYIQTQFESKNRSPNKEIYCHMTCATDTNNIQVVFDAVTDIIIANNLRGCGLY</sequence>